<organism>
    <name type="scientific">Mus musculus</name>
    <name type="common">Mouse</name>
    <dbReference type="NCBI Taxonomy" id="10090"/>
    <lineage>
        <taxon>Eukaryota</taxon>
        <taxon>Metazoa</taxon>
        <taxon>Chordata</taxon>
        <taxon>Craniata</taxon>
        <taxon>Vertebrata</taxon>
        <taxon>Euteleostomi</taxon>
        <taxon>Mammalia</taxon>
        <taxon>Eutheria</taxon>
        <taxon>Euarchontoglires</taxon>
        <taxon>Glires</taxon>
        <taxon>Rodentia</taxon>
        <taxon>Myomorpha</taxon>
        <taxon>Muroidea</taxon>
        <taxon>Muridae</taxon>
        <taxon>Murinae</taxon>
        <taxon>Mus</taxon>
        <taxon>Mus</taxon>
    </lineage>
</organism>
<accession>Q99MH6</accession>
<accession>Q3TLD6</accession>
<accession>Q8K200</accession>
<accession>Q91Y46</accession>
<feature type="initiator methionine" description="Removed">
    <location>
        <position position="1"/>
    </location>
</feature>
<feature type="chain" id="PRO_0000301991" description="Protein naked cuticle homolog 1">
    <location>
        <begin position="2"/>
        <end position="471"/>
    </location>
</feature>
<feature type="domain" description="EF-hand" evidence="2">
    <location>
        <begin position="131"/>
        <end position="166"/>
    </location>
</feature>
<feature type="region of interest" description="Disordered" evidence="3">
    <location>
        <begin position="1"/>
        <end position="23"/>
    </location>
</feature>
<feature type="region of interest" description="Disordered" evidence="3">
    <location>
        <begin position="41"/>
        <end position="82"/>
    </location>
</feature>
<feature type="region of interest" description="Interaction with DVL1, DVL2 and DVL3" evidence="5">
    <location>
        <begin position="125"/>
        <end position="190"/>
    </location>
</feature>
<feature type="region of interest" description="Disordered" evidence="3">
    <location>
        <begin position="273"/>
        <end position="314"/>
    </location>
</feature>
<feature type="region of interest" description="Disordered" evidence="3">
    <location>
        <begin position="337"/>
        <end position="382"/>
    </location>
</feature>
<feature type="region of interest" description="Disordered" evidence="3">
    <location>
        <begin position="448"/>
        <end position="471"/>
    </location>
</feature>
<feature type="compositionally biased region" description="Basic and acidic residues" evidence="3">
    <location>
        <begin position="62"/>
        <end position="75"/>
    </location>
</feature>
<feature type="compositionally biased region" description="Basic residues" evidence="3">
    <location>
        <begin position="453"/>
        <end position="471"/>
    </location>
</feature>
<feature type="binding site" evidence="2">
    <location>
        <position position="144"/>
    </location>
    <ligand>
        <name>Ca(2+)</name>
        <dbReference type="ChEBI" id="CHEBI:29108"/>
    </ligand>
</feature>
<feature type="binding site" evidence="2">
    <location>
        <position position="146"/>
    </location>
    <ligand>
        <name>Ca(2+)</name>
        <dbReference type="ChEBI" id="CHEBI:29108"/>
    </ligand>
</feature>
<feature type="binding site" evidence="2">
    <location>
        <position position="148"/>
    </location>
    <ligand>
        <name>Ca(2+)</name>
        <dbReference type="ChEBI" id="CHEBI:29108"/>
    </ligand>
</feature>
<feature type="binding site" evidence="2">
    <location>
        <position position="150"/>
    </location>
    <ligand>
        <name>Ca(2+)</name>
        <dbReference type="ChEBI" id="CHEBI:29108"/>
    </ligand>
</feature>
<feature type="binding site" evidence="2">
    <location>
        <position position="155"/>
    </location>
    <ligand>
        <name>Ca(2+)</name>
        <dbReference type="ChEBI" id="CHEBI:29108"/>
    </ligand>
</feature>
<feature type="lipid moiety-binding region" description="N-myristoyl glycine" evidence="1">
    <location>
        <position position="2"/>
    </location>
</feature>
<feature type="mutagenesis site" description="Impairs inhibition of the Wnt signaling pathway." evidence="4">
    <location>
        <begin position="138"/>
        <end position="163"/>
    </location>
</feature>
<feature type="mutagenesis site" description="Impairs inhibition of the Wnt signaling pathway; when associated with V-146." evidence="4">
    <original>D</original>
    <variation>V</variation>
    <location>
        <position position="144"/>
    </location>
</feature>
<feature type="mutagenesis site" description="Impairs inhibition of the Wnt signaling pathway; when associated with V-144." evidence="4">
    <original>D</original>
    <variation>V</variation>
    <location>
        <position position="146"/>
    </location>
</feature>
<feature type="mutagenesis site" description="Impairs inhibition of the Wnt signaling pathway." evidence="4">
    <original>G</original>
    <variation>W</variation>
    <location>
        <position position="149"/>
    </location>
</feature>
<feature type="sequence conflict" description="In Ref. 4; BAE38856." evidence="11" ref="4">
    <original>R</original>
    <variation>G</variation>
    <location>
        <position position="104"/>
    </location>
</feature>
<feature type="sequence conflict" description="In Ref. 4; BAE38856." evidence="11" ref="4">
    <original>T</original>
    <variation>A</variation>
    <location>
        <position position="186"/>
    </location>
</feature>
<feature type="sequence conflict" description="In Ref. 3; AAH34838." evidence="11" ref="3">
    <original>I</original>
    <variation>V</variation>
    <location>
        <position position="305"/>
    </location>
</feature>
<feature type="sequence conflict" description="In Ref. 4; BAE38856." evidence="11" ref="4">
    <original>A</original>
    <variation>V</variation>
    <location>
        <position position="326"/>
    </location>
</feature>
<feature type="sequence conflict" description="In Ref. 1; AAK57483." evidence="11" ref="1">
    <original>V</original>
    <variation>M</variation>
    <location>
        <position position="440"/>
    </location>
</feature>
<comment type="function">
    <text evidence="4 5 7">Cell autonomous antagonist of the canonical Wnt signaling pathway. May activate a second Wnt signaling pathway that controls planar cell polarity. Required for spermatogenesis.</text>
</comment>
<comment type="subunit">
    <text evidence="4 5 8">Interacts with DVL1, DVL2, DVL3 and PPP2R3A.</text>
</comment>
<comment type="interaction">
    <interactant intactId="EBI-1538321">
        <id>Q99MH6</id>
    </interactant>
    <interactant intactId="EBI-499383">
        <id>P51140</id>
        <label>dsh</label>
    </interactant>
    <organismsDiffer>true</organismsDiffer>
    <experiments>2</experiments>
</comment>
<comment type="subcellular location">
    <subcellularLocation>
        <location evidence="1">Cell membrane</location>
    </subcellularLocation>
    <subcellularLocation>
        <location evidence="1">Cytoplasm</location>
    </subcellularLocation>
</comment>
<comment type="tissue specificity">
    <text evidence="4 5 7">Highly expressed in lung. Also expressed in brain, heart, kidney, liver, skin, stomach and testis. Within the testis expression is found in the seminiferous epithelium and round and elongating spermatids.</text>
</comment>
<comment type="developmental stage">
    <text evidence="4 5 6 10">Expressed throughout embryonic development. Expressed in the presomitic mesoderm (PSM) and the neural folds along the entire rostrocaudal axis at 8.5 days post-coitum (dpc). Expressed in the forelimb buds, the branchial arches, and at the anterior and posterior of each somite boundary at 9.5 dpc. Expressed in the neural tube, the PSM, somites and the dorsal limb bud mesenchyme at 10.5 dpc. At 11.5 dpc three distinct phases of expression can be seen; expression is initially low in the tailbud, rises in the PSM and then shifts anteriorly. These oscillations require the activity of HES7.</text>
</comment>
<comment type="induction">
    <text evidence="4 9">Expression is induced by activation of the Wnt signaling pathway.</text>
</comment>
<comment type="similarity">
    <text evidence="11">Belongs to the NKD family.</text>
</comment>
<comment type="sequence caution" evidence="11">
    <conflict type="frameshift">
        <sequence resource="EMBL-CDS" id="BAE38856"/>
    </conflict>
</comment>
<protein>
    <recommendedName>
        <fullName>Protein naked cuticle homolog 1</fullName>
        <shortName>Naked-1</shortName>
        <shortName>mNkd</shortName>
        <shortName>mNkd1</shortName>
    </recommendedName>
</protein>
<sequence length="471" mass="52391">MGKLHSKPAAVCKRRESPEGDSFAVSAAWARKGIEEWIGRQRCPGSVSGPRQLRLAGTVGRGTRELVGDTSREALGEEDEDDFPLEVALPPEKIDSLGSGDEKRMERLSEPGQASKKQLKFEELQCDVSVEEDSRQEWTFTLYDFDNNGKVTREDITSLLHTIYEVVDSSVNHSPTSSKTLRVKLTVAPDGSQSKRSVLFNHTDLQSTRPRADTKPAEELRGWEKKQRAPLRFQGDSHLEQPDCYHHCVDENIERRNHYLDLAGIENYTSQFGPGSPSVAQKSELPPRISNPTRSRSHEPEAAHIPHRRPQGVDPGSFHLLDTPFAKASELQQRLRGTQDGSKHFVRSPKAQGKNMGMGHGARGARSKPPLVPTTHTVSPSAHLATSPALLPTLAPLGHKKHKHRAKESQASCRGLQGPLAAGGSTVMGREQVRELPAVVVYESQAGQAVQRHEHHHHHEHHHHYHHFYQP</sequence>
<keyword id="KW-0106">Calcium</keyword>
<keyword id="KW-1003">Cell membrane</keyword>
<keyword id="KW-0963">Cytoplasm</keyword>
<keyword id="KW-0217">Developmental protein</keyword>
<keyword id="KW-0221">Differentiation</keyword>
<keyword id="KW-0449">Lipoprotein</keyword>
<keyword id="KW-0472">Membrane</keyword>
<keyword id="KW-0479">Metal-binding</keyword>
<keyword id="KW-0519">Myristate</keyword>
<keyword id="KW-1185">Reference proteome</keyword>
<keyword id="KW-0744">Spermatogenesis</keyword>
<keyword id="KW-0879">Wnt signaling pathway</keyword>
<reference key="1">
    <citation type="journal article" date="2001" name="Dev. Biol.">
        <title>Vertebrate proteins related to Drosophila Naked Cuticle bind Dishevelled and antagonize Wnt signaling.</title>
        <authorList>
            <person name="Wharton K.A. Jr."/>
            <person name="Zimmermann G."/>
            <person name="Rousset R."/>
            <person name="Scott M.P."/>
        </authorList>
    </citation>
    <scope>NUCLEOTIDE SEQUENCE [MRNA]</scope>
    <scope>FUNCTION</scope>
    <scope>INTERACTION WITH DVL1; DVL2 AND DVL3</scope>
    <scope>TISSUE SPECIFICITY</scope>
    <scope>DEVELOPMENTAL STAGE</scope>
    <source>
        <strain>C57BL/6 X CBA</strain>
        <tissue>Lung</tissue>
    </source>
</reference>
<reference key="2">
    <citation type="journal article" date="2001" name="Proc. Natl. Acad. Sci. U.S.A.">
        <title>Cell autonomous regulation of multiple Dishevelled-dependent pathways by mammalian Nkd.</title>
        <authorList>
            <person name="Yan D."/>
            <person name="Wallingford J.B."/>
            <person name="Sun T.-Q."/>
            <person name="Nelson A.M."/>
            <person name="Sakanaka C."/>
            <person name="Reinhard C."/>
            <person name="Harland R.M."/>
            <person name="Fantl W.J."/>
            <person name="Williams L.T."/>
        </authorList>
    </citation>
    <scope>NUCLEOTIDE SEQUENCE [MRNA]</scope>
    <scope>FUNCTION</scope>
    <scope>INTERACTION WITH DVL3</scope>
    <scope>TISSUE SPECIFICITY</scope>
    <scope>DEVELOPMENTAL STAGE</scope>
    <scope>INDUCTION</scope>
    <scope>MUTAGENESIS OF 138-TRP--ILE-163; ASP-144; ASP-146 AND GLY-149</scope>
</reference>
<reference key="3">
    <citation type="journal article" date="2004" name="Genome Res.">
        <title>The status, quality, and expansion of the NIH full-length cDNA project: the Mammalian Gene Collection (MGC).</title>
        <authorList>
            <consortium name="The MGC Project Team"/>
        </authorList>
    </citation>
    <scope>NUCLEOTIDE SEQUENCE [LARGE SCALE MRNA]</scope>
    <source>
        <strain>C57BL/6J</strain>
        <tissue>Mammary gland</tissue>
    </source>
</reference>
<reference key="4">
    <citation type="journal article" date="2005" name="Science">
        <title>The transcriptional landscape of the mammalian genome.</title>
        <authorList>
            <person name="Carninci P."/>
            <person name="Kasukawa T."/>
            <person name="Katayama S."/>
            <person name="Gough J."/>
            <person name="Frith M.C."/>
            <person name="Maeda N."/>
            <person name="Oyama R."/>
            <person name="Ravasi T."/>
            <person name="Lenhard B."/>
            <person name="Wells C."/>
            <person name="Kodzius R."/>
            <person name="Shimokawa K."/>
            <person name="Bajic V.B."/>
            <person name="Brenner S.E."/>
            <person name="Batalov S."/>
            <person name="Forrest A.R."/>
            <person name="Zavolan M."/>
            <person name="Davis M.J."/>
            <person name="Wilming L.G."/>
            <person name="Aidinis V."/>
            <person name="Allen J.E."/>
            <person name="Ambesi-Impiombato A."/>
            <person name="Apweiler R."/>
            <person name="Aturaliya R.N."/>
            <person name="Bailey T.L."/>
            <person name="Bansal M."/>
            <person name="Baxter L."/>
            <person name="Beisel K.W."/>
            <person name="Bersano T."/>
            <person name="Bono H."/>
            <person name="Chalk A.M."/>
            <person name="Chiu K.P."/>
            <person name="Choudhary V."/>
            <person name="Christoffels A."/>
            <person name="Clutterbuck D.R."/>
            <person name="Crowe M.L."/>
            <person name="Dalla E."/>
            <person name="Dalrymple B.P."/>
            <person name="de Bono B."/>
            <person name="Della Gatta G."/>
            <person name="di Bernardo D."/>
            <person name="Down T."/>
            <person name="Engstrom P."/>
            <person name="Fagiolini M."/>
            <person name="Faulkner G."/>
            <person name="Fletcher C.F."/>
            <person name="Fukushima T."/>
            <person name="Furuno M."/>
            <person name="Futaki S."/>
            <person name="Gariboldi M."/>
            <person name="Georgii-Hemming P."/>
            <person name="Gingeras T.R."/>
            <person name="Gojobori T."/>
            <person name="Green R.E."/>
            <person name="Gustincich S."/>
            <person name="Harbers M."/>
            <person name="Hayashi Y."/>
            <person name="Hensch T.K."/>
            <person name="Hirokawa N."/>
            <person name="Hill D."/>
            <person name="Huminiecki L."/>
            <person name="Iacono M."/>
            <person name="Ikeo K."/>
            <person name="Iwama A."/>
            <person name="Ishikawa T."/>
            <person name="Jakt M."/>
            <person name="Kanapin A."/>
            <person name="Katoh M."/>
            <person name="Kawasawa Y."/>
            <person name="Kelso J."/>
            <person name="Kitamura H."/>
            <person name="Kitano H."/>
            <person name="Kollias G."/>
            <person name="Krishnan S.P."/>
            <person name="Kruger A."/>
            <person name="Kummerfeld S.K."/>
            <person name="Kurochkin I.V."/>
            <person name="Lareau L.F."/>
            <person name="Lazarevic D."/>
            <person name="Lipovich L."/>
            <person name="Liu J."/>
            <person name="Liuni S."/>
            <person name="McWilliam S."/>
            <person name="Madan Babu M."/>
            <person name="Madera M."/>
            <person name="Marchionni L."/>
            <person name="Matsuda H."/>
            <person name="Matsuzawa S."/>
            <person name="Miki H."/>
            <person name="Mignone F."/>
            <person name="Miyake S."/>
            <person name="Morris K."/>
            <person name="Mottagui-Tabar S."/>
            <person name="Mulder N."/>
            <person name="Nakano N."/>
            <person name="Nakauchi H."/>
            <person name="Ng P."/>
            <person name="Nilsson R."/>
            <person name="Nishiguchi S."/>
            <person name="Nishikawa S."/>
            <person name="Nori F."/>
            <person name="Ohara O."/>
            <person name="Okazaki Y."/>
            <person name="Orlando V."/>
            <person name="Pang K.C."/>
            <person name="Pavan W.J."/>
            <person name="Pavesi G."/>
            <person name="Pesole G."/>
            <person name="Petrovsky N."/>
            <person name="Piazza S."/>
            <person name="Reed J."/>
            <person name="Reid J.F."/>
            <person name="Ring B.Z."/>
            <person name="Ringwald M."/>
            <person name="Rost B."/>
            <person name="Ruan Y."/>
            <person name="Salzberg S.L."/>
            <person name="Sandelin A."/>
            <person name="Schneider C."/>
            <person name="Schoenbach C."/>
            <person name="Sekiguchi K."/>
            <person name="Semple C.A."/>
            <person name="Seno S."/>
            <person name="Sessa L."/>
            <person name="Sheng Y."/>
            <person name="Shibata Y."/>
            <person name="Shimada H."/>
            <person name="Shimada K."/>
            <person name="Silva D."/>
            <person name="Sinclair B."/>
            <person name="Sperling S."/>
            <person name="Stupka E."/>
            <person name="Sugiura K."/>
            <person name="Sultana R."/>
            <person name="Takenaka Y."/>
            <person name="Taki K."/>
            <person name="Tammoja K."/>
            <person name="Tan S.L."/>
            <person name="Tang S."/>
            <person name="Taylor M.S."/>
            <person name="Tegner J."/>
            <person name="Teichmann S.A."/>
            <person name="Ueda H.R."/>
            <person name="van Nimwegen E."/>
            <person name="Verardo R."/>
            <person name="Wei C.L."/>
            <person name="Yagi K."/>
            <person name="Yamanishi H."/>
            <person name="Zabarovsky E."/>
            <person name="Zhu S."/>
            <person name="Zimmer A."/>
            <person name="Hide W."/>
            <person name="Bult C."/>
            <person name="Grimmond S.M."/>
            <person name="Teasdale R.D."/>
            <person name="Liu E.T."/>
            <person name="Brusic V."/>
            <person name="Quackenbush J."/>
            <person name="Wahlestedt C."/>
            <person name="Mattick J.S."/>
            <person name="Hume D.A."/>
            <person name="Kai C."/>
            <person name="Sasaki D."/>
            <person name="Tomaru Y."/>
            <person name="Fukuda S."/>
            <person name="Kanamori-Katayama M."/>
            <person name="Suzuki M."/>
            <person name="Aoki J."/>
            <person name="Arakawa T."/>
            <person name="Iida J."/>
            <person name="Imamura K."/>
            <person name="Itoh M."/>
            <person name="Kato T."/>
            <person name="Kawaji H."/>
            <person name="Kawagashira N."/>
            <person name="Kawashima T."/>
            <person name="Kojima M."/>
            <person name="Kondo S."/>
            <person name="Konno H."/>
            <person name="Nakano K."/>
            <person name="Ninomiya N."/>
            <person name="Nishio T."/>
            <person name="Okada M."/>
            <person name="Plessy C."/>
            <person name="Shibata K."/>
            <person name="Shiraki T."/>
            <person name="Suzuki S."/>
            <person name="Tagami M."/>
            <person name="Waki K."/>
            <person name="Watahiki A."/>
            <person name="Okamura-Oho Y."/>
            <person name="Suzuki H."/>
            <person name="Kawai J."/>
            <person name="Hayashizaki Y."/>
        </authorList>
    </citation>
    <scope>NUCLEOTIDE SEQUENCE [LARGE SCALE MRNA] OF 1-326</scope>
    <source>
        <strain>C57BL/6J</strain>
    </source>
</reference>
<reference key="5">
    <citation type="journal article" date="2004" name="Mech. Dev.">
        <title>Mouse Nkd1, a Wnt antagonist, exhibits oscillatory gene expression in the PSM under the control of Notch signaling.</title>
        <authorList>
            <person name="Ishikawa A."/>
            <person name="Kitajima S."/>
            <person name="Takahashi Y."/>
            <person name="Kokubo H."/>
            <person name="Kanno J."/>
            <person name="Inoue T."/>
            <person name="Saga Y."/>
        </authorList>
    </citation>
    <scope>DEVELOPMENTAL STAGE</scope>
</reference>
<reference key="6">
    <citation type="journal article" date="2005" name="Genes Dev.">
        <title>PR72, a novel regulator of Wnt signaling required for Naked cuticle function.</title>
        <authorList>
            <person name="Creyghton M.P."/>
            <person name="Roeel G."/>
            <person name="Eichhorn P.J.A."/>
            <person name="Hijmans E.M."/>
            <person name="Maurer I."/>
            <person name="Destree O."/>
            <person name="Bernards R."/>
        </authorList>
    </citation>
    <scope>INTERACTION WITH PPP2R3A</scope>
</reference>
<reference key="7">
    <citation type="journal article" date="2005" name="J. Biol. Chem.">
        <title>A targeted mutation of Nkd1 impairs mouse spermatogenesis.</title>
        <authorList>
            <person name="Li Q."/>
            <person name="Ishikawa T.O."/>
            <person name="Miyoshi H."/>
            <person name="Oshima M."/>
            <person name="Taketo M.M."/>
        </authorList>
    </citation>
    <scope>FUNCTION</scope>
    <scope>TISSUE SPECIFICITY</scope>
</reference>
<reference key="8">
    <citation type="journal article" date="2006" name="Cancer Res.">
        <title>Dominant-stable beta-catenin expression causes cell fate alterations and Wnt signaling antagonist expression in a murine granulosa cell tumor model.</title>
        <authorList>
            <person name="Boerboom D."/>
            <person name="White L.D."/>
            <person name="Dalle S."/>
            <person name="Courty J."/>
            <person name="Richards J.S."/>
        </authorList>
    </citation>
    <scope>INDUCTION</scope>
</reference>
<reference key="9">
    <citation type="journal article" date="2007" name="Mol. Cell. Biol.">
        <title>Viable mice with compound mutations in the Wnt/Dvl pathway antagonists nkd1 and nkd2.</title>
        <authorList>
            <person name="Zhang S."/>
            <person name="Cagatay T."/>
            <person name="Amanai M."/>
            <person name="Zhang M."/>
            <person name="Kline J."/>
            <person name="Castrillon D.H."/>
            <person name="Ashfaq R."/>
            <person name="Oez O.K."/>
            <person name="Wharton K.A. Jr."/>
        </authorList>
    </citation>
    <scope>DEVELOPMENTAL STAGE</scope>
</reference>
<dbReference type="EMBL" id="AF358134">
    <property type="protein sequence ID" value="AAK57483.1"/>
    <property type="molecule type" value="mRNA"/>
</dbReference>
<dbReference type="EMBL" id="AF343352">
    <property type="protein sequence ID" value="AAK27485.1"/>
    <property type="molecule type" value="mRNA"/>
</dbReference>
<dbReference type="EMBL" id="BC034838">
    <property type="protein sequence ID" value="AAH34838.1"/>
    <property type="molecule type" value="mRNA"/>
</dbReference>
<dbReference type="EMBL" id="AK166564">
    <property type="protein sequence ID" value="BAE38856.1"/>
    <property type="status" value="ALT_FRAME"/>
    <property type="molecule type" value="mRNA"/>
</dbReference>
<dbReference type="CCDS" id="CCDS22511.1"/>
<dbReference type="RefSeq" id="NP_081556.3">
    <property type="nucleotide sequence ID" value="NM_027280.3"/>
</dbReference>
<dbReference type="FunCoup" id="Q99MH6">
    <property type="interactions" value="290"/>
</dbReference>
<dbReference type="IntAct" id="Q99MH6">
    <property type="interactions" value="5"/>
</dbReference>
<dbReference type="STRING" id="10090.ENSMUSP00000034086"/>
<dbReference type="iPTMnet" id="Q99MH6"/>
<dbReference type="PhosphoSitePlus" id="Q99MH6"/>
<dbReference type="PaxDb" id="10090-ENSMUSP00000034086"/>
<dbReference type="ProteomicsDB" id="293666"/>
<dbReference type="Antibodypedia" id="14551">
    <property type="antibodies" value="150 antibodies from 25 providers"/>
</dbReference>
<dbReference type="Ensembl" id="ENSMUST00000034086.13">
    <property type="protein sequence ID" value="ENSMUSP00000034086.6"/>
    <property type="gene ID" value="ENSMUSG00000031661.13"/>
</dbReference>
<dbReference type="GeneID" id="93960"/>
<dbReference type="KEGG" id="mmu:93960"/>
<dbReference type="UCSC" id="uc009mro.2">
    <property type="organism name" value="mouse"/>
</dbReference>
<dbReference type="AGR" id="MGI:2135954"/>
<dbReference type="CTD" id="85407"/>
<dbReference type="MGI" id="MGI:2135954">
    <property type="gene designation" value="Nkd1"/>
</dbReference>
<dbReference type="VEuPathDB" id="HostDB:ENSMUSG00000031661"/>
<dbReference type="eggNOG" id="ENOG502QT1X">
    <property type="taxonomic scope" value="Eukaryota"/>
</dbReference>
<dbReference type="GeneTree" id="ENSGT00440000033589"/>
<dbReference type="HOGENOM" id="CLU_035610_1_1_1"/>
<dbReference type="InParanoid" id="Q99MH6"/>
<dbReference type="OMA" id="KETHQLC"/>
<dbReference type="OrthoDB" id="5953812at2759"/>
<dbReference type="PhylomeDB" id="Q99MH6"/>
<dbReference type="TreeFam" id="TF328786"/>
<dbReference type="BioGRID-ORCS" id="93960">
    <property type="hits" value="1 hit in 78 CRISPR screens"/>
</dbReference>
<dbReference type="ChiTaRS" id="Nkd1">
    <property type="organism name" value="mouse"/>
</dbReference>
<dbReference type="PRO" id="PR:Q99MH6"/>
<dbReference type="Proteomes" id="UP000000589">
    <property type="component" value="Chromosome 8"/>
</dbReference>
<dbReference type="RNAct" id="Q99MH6">
    <property type="molecule type" value="protein"/>
</dbReference>
<dbReference type="Bgee" id="ENSMUSG00000031661">
    <property type="expression patterns" value="Expressed in animal zygote and 218 other cell types or tissues"/>
</dbReference>
<dbReference type="ExpressionAtlas" id="Q99MH6">
    <property type="expression patterns" value="baseline and differential"/>
</dbReference>
<dbReference type="GO" id="GO:0005737">
    <property type="term" value="C:cytoplasm"/>
    <property type="evidence" value="ECO:0007669"/>
    <property type="project" value="UniProtKB-SubCell"/>
</dbReference>
<dbReference type="GO" id="GO:0005886">
    <property type="term" value="C:plasma membrane"/>
    <property type="evidence" value="ECO:0007669"/>
    <property type="project" value="UniProtKB-SubCell"/>
</dbReference>
<dbReference type="GO" id="GO:0000159">
    <property type="term" value="C:protein phosphatase type 2A complex"/>
    <property type="evidence" value="ECO:0007669"/>
    <property type="project" value="Ensembl"/>
</dbReference>
<dbReference type="GO" id="GO:0005509">
    <property type="term" value="F:calcium ion binding"/>
    <property type="evidence" value="ECO:0007669"/>
    <property type="project" value="InterPro"/>
</dbReference>
<dbReference type="GO" id="GO:0030165">
    <property type="term" value="F:PDZ domain binding"/>
    <property type="evidence" value="ECO:0000353"/>
    <property type="project" value="BHF-UCL"/>
</dbReference>
<dbReference type="GO" id="GO:0003401">
    <property type="term" value="P:axis elongation"/>
    <property type="evidence" value="ECO:0000315"/>
    <property type="project" value="BHF-UCL"/>
</dbReference>
<dbReference type="GO" id="GO:0030154">
    <property type="term" value="P:cell differentiation"/>
    <property type="evidence" value="ECO:0007669"/>
    <property type="project" value="UniProtKB-KW"/>
</dbReference>
<dbReference type="GO" id="GO:0060026">
    <property type="term" value="P:convergent extension"/>
    <property type="evidence" value="ECO:0000315"/>
    <property type="project" value="BHF-UCL"/>
</dbReference>
<dbReference type="GO" id="GO:0090090">
    <property type="term" value="P:negative regulation of canonical Wnt signaling pathway"/>
    <property type="evidence" value="ECO:0000314"/>
    <property type="project" value="BHF-UCL"/>
</dbReference>
<dbReference type="GO" id="GO:0030178">
    <property type="term" value="P:negative regulation of Wnt signaling pathway"/>
    <property type="evidence" value="ECO:0000316"/>
    <property type="project" value="BHF-UCL"/>
</dbReference>
<dbReference type="GO" id="GO:0043410">
    <property type="term" value="P:positive regulation of MAPK cascade"/>
    <property type="evidence" value="ECO:0000314"/>
    <property type="project" value="BHF-UCL"/>
</dbReference>
<dbReference type="GO" id="GO:2000052">
    <property type="term" value="P:positive regulation of non-canonical Wnt signaling pathway"/>
    <property type="evidence" value="ECO:0000314"/>
    <property type="project" value="BHF-UCL"/>
</dbReference>
<dbReference type="GO" id="GO:0045732">
    <property type="term" value="P:positive regulation of protein catabolic process"/>
    <property type="evidence" value="ECO:0007669"/>
    <property type="project" value="Ensembl"/>
</dbReference>
<dbReference type="GO" id="GO:2000096">
    <property type="term" value="P:positive regulation of Wnt signaling pathway, planar cell polarity pathway"/>
    <property type="evidence" value="ECO:0000314"/>
    <property type="project" value="BHF-UCL"/>
</dbReference>
<dbReference type="GO" id="GO:0007283">
    <property type="term" value="P:spermatogenesis"/>
    <property type="evidence" value="ECO:0007669"/>
    <property type="project" value="UniProtKB-KW"/>
</dbReference>
<dbReference type="GO" id="GO:0016055">
    <property type="term" value="P:Wnt signaling pathway"/>
    <property type="evidence" value="ECO:0007669"/>
    <property type="project" value="UniProtKB-KW"/>
</dbReference>
<dbReference type="FunFam" id="1.10.238.10:FF:000166">
    <property type="entry name" value="Naked cuticle homolog 1 (Drosophila)"/>
    <property type="match status" value="1"/>
</dbReference>
<dbReference type="Gene3D" id="1.10.238.10">
    <property type="entry name" value="EF-hand"/>
    <property type="match status" value="1"/>
</dbReference>
<dbReference type="InterPro" id="IPR011992">
    <property type="entry name" value="EF-hand-dom_pair"/>
</dbReference>
<dbReference type="InterPro" id="IPR018247">
    <property type="entry name" value="EF_Hand_1_Ca_BS"/>
</dbReference>
<dbReference type="InterPro" id="IPR002048">
    <property type="entry name" value="EF_hand_dom"/>
</dbReference>
<dbReference type="InterPro" id="IPR040140">
    <property type="entry name" value="Nkd-like"/>
</dbReference>
<dbReference type="PANTHER" id="PTHR22611">
    <property type="entry name" value="PROTEIN NAKED CUTICLE"/>
    <property type="match status" value="1"/>
</dbReference>
<dbReference type="PANTHER" id="PTHR22611:SF2">
    <property type="entry name" value="PROTEIN NAKED CUTICLE HOMOLOG 1"/>
    <property type="match status" value="1"/>
</dbReference>
<dbReference type="SUPFAM" id="SSF47473">
    <property type="entry name" value="EF-hand"/>
    <property type="match status" value="1"/>
</dbReference>
<dbReference type="PROSITE" id="PS00018">
    <property type="entry name" value="EF_HAND_1"/>
    <property type="match status" value="1"/>
</dbReference>
<dbReference type="PROSITE" id="PS50222">
    <property type="entry name" value="EF_HAND_2"/>
    <property type="match status" value="1"/>
</dbReference>
<gene>
    <name type="primary">Nkd1</name>
</gene>
<name>NKD1_MOUSE</name>
<evidence type="ECO:0000250" key="1"/>
<evidence type="ECO:0000255" key="2">
    <source>
        <dbReference type="PROSITE-ProRule" id="PRU00448"/>
    </source>
</evidence>
<evidence type="ECO:0000256" key="3">
    <source>
        <dbReference type="SAM" id="MobiDB-lite"/>
    </source>
</evidence>
<evidence type="ECO:0000269" key="4">
    <source>
    </source>
</evidence>
<evidence type="ECO:0000269" key="5">
    <source>
    </source>
</evidence>
<evidence type="ECO:0000269" key="6">
    <source>
    </source>
</evidence>
<evidence type="ECO:0000269" key="7">
    <source>
    </source>
</evidence>
<evidence type="ECO:0000269" key="8">
    <source>
    </source>
</evidence>
<evidence type="ECO:0000269" key="9">
    <source>
    </source>
</evidence>
<evidence type="ECO:0000269" key="10">
    <source>
    </source>
</evidence>
<evidence type="ECO:0000305" key="11"/>
<proteinExistence type="evidence at protein level"/>